<dbReference type="EC" id="2.4.1.17" evidence="1"/>
<dbReference type="EMBL" id="U20551">
    <property type="protein sequence ID" value="AAC52219.1"/>
    <property type="molecule type" value="Genomic_DNA"/>
</dbReference>
<dbReference type="EMBL" id="D38065">
    <property type="protein sequence ID" value="BAA07260.1"/>
    <property type="molecule type" value="Genomic_DNA"/>
</dbReference>
<dbReference type="PIR" id="I57961">
    <property type="entry name" value="I57961"/>
</dbReference>
<dbReference type="RefSeq" id="NP_036815.1">
    <molecule id="Q64550-1"/>
    <property type="nucleotide sequence ID" value="NM_012683.2"/>
</dbReference>
<dbReference type="SMR" id="Q64550"/>
<dbReference type="FunCoup" id="Q64550">
    <property type="interactions" value="243"/>
</dbReference>
<dbReference type="IntAct" id="Q64550">
    <property type="interactions" value="1"/>
</dbReference>
<dbReference type="STRING" id="10116.ENSRNOP00000025045"/>
<dbReference type="BindingDB" id="Q64550"/>
<dbReference type="ChEMBL" id="CHEMBL4523339"/>
<dbReference type="CAZy" id="GT1">
    <property type="family name" value="Glycosyltransferase Family 1"/>
</dbReference>
<dbReference type="GlyCosmos" id="Q64550">
    <property type="glycosylation" value="3 sites, No reported glycans"/>
</dbReference>
<dbReference type="GlyGen" id="Q64550">
    <property type="glycosylation" value="4 sites"/>
</dbReference>
<dbReference type="PhosphoSitePlus" id="Q64550"/>
<dbReference type="SwissPalm" id="Q64550"/>
<dbReference type="PaxDb" id="10116-ENSRNOP00000025045"/>
<dbReference type="Ensembl" id="ENSRNOT00000025045.7">
    <molecule id="Q64550-1"/>
    <property type="protein sequence ID" value="ENSRNOP00000025045.4"/>
    <property type="gene ID" value="ENSRNOG00000018740.9"/>
</dbReference>
<dbReference type="GeneID" id="24861"/>
<dbReference type="KEGG" id="rno:24861"/>
<dbReference type="AGR" id="RGD:3935"/>
<dbReference type="CTD" id="54658"/>
<dbReference type="RGD" id="3935">
    <property type="gene designation" value="Ugt1a1"/>
</dbReference>
<dbReference type="eggNOG" id="KOG1192">
    <property type="taxonomic scope" value="Eukaryota"/>
</dbReference>
<dbReference type="GeneTree" id="ENSGT00940000159677"/>
<dbReference type="HOGENOM" id="CLU_012949_3_1_1"/>
<dbReference type="InParanoid" id="Q64550"/>
<dbReference type="OrthoDB" id="5835829at2759"/>
<dbReference type="TreeFam" id="TF315472"/>
<dbReference type="BRENDA" id="2.4.1.17">
    <property type="organism ID" value="5301"/>
</dbReference>
<dbReference type="Reactome" id="R-RNO-156588">
    <property type="pathway name" value="Glucuronidation"/>
</dbReference>
<dbReference type="Reactome" id="R-RNO-189483">
    <property type="pathway name" value="Heme degradation"/>
</dbReference>
<dbReference type="Reactome" id="R-RNO-9749641">
    <property type="pathway name" value="Aspirin ADME"/>
</dbReference>
<dbReference type="Reactome" id="R-RNO-9753281">
    <property type="pathway name" value="Paracetamol ADME"/>
</dbReference>
<dbReference type="PRO" id="PR:Q64550"/>
<dbReference type="Proteomes" id="UP000002494">
    <property type="component" value="Chromosome 9"/>
</dbReference>
<dbReference type="Bgee" id="ENSRNOG00000018740">
    <property type="expression patterns" value="Expressed in duodenum and 20 other cell types or tissues"/>
</dbReference>
<dbReference type="ExpressionAtlas" id="Q64550">
    <property type="expression patterns" value="baseline and differential"/>
</dbReference>
<dbReference type="GO" id="GO:0070069">
    <property type="term" value="C:cytochrome complex"/>
    <property type="evidence" value="ECO:0000314"/>
    <property type="project" value="RGD"/>
</dbReference>
<dbReference type="GO" id="GO:0005783">
    <property type="term" value="C:endoplasmic reticulum"/>
    <property type="evidence" value="ECO:0000314"/>
    <property type="project" value="HGNC-UCL"/>
</dbReference>
<dbReference type="GO" id="GO:0034663">
    <property type="term" value="C:endoplasmic reticulum chaperone complex"/>
    <property type="evidence" value="ECO:0000266"/>
    <property type="project" value="RGD"/>
</dbReference>
<dbReference type="GO" id="GO:0005789">
    <property type="term" value="C:endoplasmic reticulum membrane"/>
    <property type="evidence" value="ECO:0007669"/>
    <property type="project" value="UniProtKB-SubCell"/>
</dbReference>
<dbReference type="GO" id="GO:0005886">
    <property type="term" value="C:plasma membrane"/>
    <property type="evidence" value="ECO:0000266"/>
    <property type="project" value="RGD"/>
</dbReference>
<dbReference type="GO" id="GO:0019899">
    <property type="term" value="F:enzyme binding"/>
    <property type="evidence" value="ECO:0000314"/>
    <property type="project" value="RGD"/>
</dbReference>
<dbReference type="GO" id="GO:0004857">
    <property type="term" value="F:enzyme inhibitor activity"/>
    <property type="evidence" value="ECO:0000266"/>
    <property type="project" value="RGD"/>
</dbReference>
<dbReference type="GO" id="GO:0015020">
    <property type="term" value="F:glucuronosyltransferase activity"/>
    <property type="evidence" value="ECO:0000314"/>
    <property type="project" value="RGD"/>
</dbReference>
<dbReference type="GO" id="GO:0042803">
    <property type="term" value="F:protein homodimerization activity"/>
    <property type="evidence" value="ECO:0000266"/>
    <property type="project" value="RGD"/>
</dbReference>
<dbReference type="GO" id="GO:0001972">
    <property type="term" value="F:retinoic acid binding"/>
    <property type="evidence" value="ECO:0000266"/>
    <property type="project" value="RGD"/>
</dbReference>
<dbReference type="GO" id="GO:0005496">
    <property type="term" value="F:steroid binding"/>
    <property type="evidence" value="ECO:0000266"/>
    <property type="project" value="RGD"/>
</dbReference>
<dbReference type="GO" id="GO:0006953">
    <property type="term" value="P:acute-phase response"/>
    <property type="evidence" value="ECO:0000270"/>
    <property type="project" value="RGD"/>
</dbReference>
<dbReference type="GO" id="GO:0031100">
    <property type="term" value="P:animal organ regeneration"/>
    <property type="evidence" value="ECO:0000270"/>
    <property type="project" value="RGD"/>
</dbReference>
<dbReference type="GO" id="GO:0006789">
    <property type="term" value="P:bilirubin conjugation"/>
    <property type="evidence" value="ECO:0000304"/>
    <property type="project" value="RGD"/>
</dbReference>
<dbReference type="GO" id="GO:0070980">
    <property type="term" value="P:biphenyl catabolic process"/>
    <property type="evidence" value="ECO:0000314"/>
    <property type="project" value="RGD"/>
</dbReference>
<dbReference type="GO" id="GO:0071392">
    <property type="term" value="P:cellular response to estradiol stimulus"/>
    <property type="evidence" value="ECO:0000270"/>
    <property type="project" value="RGD"/>
</dbReference>
<dbReference type="GO" id="GO:0071361">
    <property type="term" value="P:cellular response to ethanol"/>
    <property type="evidence" value="ECO:0000270"/>
    <property type="project" value="RGD"/>
</dbReference>
<dbReference type="GO" id="GO:0071385">
    <property type="term" value="P:cellular response to glucocorticoid stimulus"/>
    <property type="evidence" value="ECO:0000270"/>
    <property type="project" value="RGD"/>
</dbReference>
<dbReference type="GO" id="GO:0032870">
    <property type="term" value="P:cellular response to hormone stimulus"/>
    <property type="evidence" value="ECO:0000270"/>
    <property type="project" value="RGD"/>
</dbReference>
<dbReference type="GO" id="GO:0071466">
    <property type="term" value="P:cellular response to xenobiotic stimulus"/>
    <property type="evidence" value="ECO:0000270"/>
    <property type="project" value="RGD"/>
</dbReference>
<dbReference type="GO" id="GO:0008210">
    <property type="term" value="P:estrogen metabolic process"/>
    <property type="evidence" value="ECO:0000266"/>
    <property type="project" value="RGD"/>
</dbReference>
<dbReference type="GO" id="GO:0051552">
    <property type="term" value="P:flavone metabolic process"/>
    <property type="evidence" value="ECO:0000266"/>
    <property type="project" value="RGD"/>
</dbReference>
<dbReference type="GO" id="GO:0009812">
    <property type="term" value="P:flavonoid metabolic process"/>
    <property type="evidence" value="ECO:0000314"/>
    <property type="project" value="RGD"/>
</dbReference>
<dbReference type="GO" id="GO:0001889">
    <property type="term" value="P:liver development"/>
    <property type="evidence" value="ECO:0000270"/>
    <property type="project" value="RGD"/>
</dbReference>
<dbReference type="GO" id="GO:0045471">
    <property type="term" value="P:response to ethanol"/>
    <property type="evidence" value="ECO:0000270"/>
    <property type="project" value="RGD"/>
</dbReference>
<dbReference type="GO" id="GO:0051384">
    <property type="term" value="P:response to glucocorticoid"/>
    <property type="evidence" value="ECO:0000270"/>
    <property type="project" value="RGD"/>
</dbReference>
<dbReference type="GO" id="GO:0032496">
    <property type="term" value="P:response to lipopolysaccharide"/>
    <property type="evidence" value="ECO:0000270"/>
    <property type="project" value="RGD"/>
</dbReference>
<dbReference type="GO" id="GO:0007584">
    <property type="term" value="P:response to nutrient"/>
    <property type="evidence" value="ECO:0000270"/>
    <property type="project" value="RGD"/>
</dbReference>
<dbReference type="GO" id="GO:0042594">
    <property type="term" value="P:response to starvation"/>
    <property type="evidence" value="ECO:0000270"/>
    <property type="project" value="RGD"/>
</dbReference>
<dbReference type="GO" id="GO:0048545">
    <property type="term" value="P:response to steroid hormone"/>
    <property type="evidence" value="ECO:0000270"/>
    <property type="project" value="RGD"/>
</dbReference>
<dbReference type="GO" id="GO:0009410">
    <property type="term" value="P:response to xenobiotic stimulus"/>
    <property type="evidence" value="ECO:0000270"/>
    <property type="project" value="RGD"/>
</dbReference>
<dbReference type="GO" id="GO:0006805">
    <property type="term" value="P:xenobiotic metabolic process"/>
    <property type="evidence" value="ECO:0000314"/>
    <property type="project" value="RGD"/>
</dbReference>
<dbReference type="CDD" id="cd03784">
    <property type="entry name" value="GT1_Gtf-like"/>
    <property type="match status" value="1"/>
</dbReference>
<dbReference type="FunFam" id="3.40.50.2000:FF:000001">
    <property type="entry name" value="UDP-glucuronosyltransferase"/>
    <property type="match status" value="1"/>
</dbReference>
<dbReference type="FunFam" id="3.40.50.2000:FF:000066">
    <property type="entry name" value="UDP-glucuronosyltransferase 1-1"/>
    <property type="match status" value="1"/>
</dbReference>
<dbReference type="Gene3D" id="3.40.50.2000">
    <property type="entry name" value="Glycogen Phosphorylase B"/>
    <property type="match status" value="2"/>
</dbReference>
<dbReference type="InterPro" id="IPR050271">
    <property type="entry name" value="UDP-glycosyltransferase"/>
</dbReference>
<dbReference type="InterPro" id="IPR002213">
    <property type="entry name" value="UDP_glucos_trans"/>
</dbReference>
<dbReference type="InterPro" id="IPR035595">
    <property type="entry name" value="UDP_glycos_trans_CS"/>
</dbReference>
<dbReference type="PANTHER" id="PTHR48043">
    <property type="entry name" value="EG:EG0003.4 PROTEIN-RELATED"/>
    <property type="match status" value="1"/>
</dbReference>
<dbReference type="PANTHER" id="PTHR48043:SF161">
    <property type="entry name" value="UDP GLUCURONOSYLTRANSFERASE FAMILY 1 MEMBER A1"/>
    <property type="match status" value="1"/>
</dbReference>
<dbReference type="Pfam" id="PF00201">
    <property type="entry name" value="UDPGT"/>
    <property type="match status" value="1"/>
</dbReference>
<dbReference type="SUPFAM" id="SSF53756">
    <property type="entry name" value="UDP-Glycosyltransferase/glycogen phosphorylase"/>
    <property type="match status" value="1"/>
</dbReference>
<dbReference type="PROSITE" id="PS00375">
    <property type="entry name" value="UDPGT"/>
    <property type="match status" value="1"/>
</dbReference>
<organism>
    <name type="scientific">Rattus norvegicus</name>
    <name type="common">Rat</name>
    <dbReference type="NCBI Taxonomy" id="10116"/>
    <lineage>
        <taxon>Eukaryota</taxon>
        <taxon>Metazoa</taxon>
        <taxon>Chordata</taxon>
        <taxon>Craniata</taxon>
        <taxon>Vertebrata</taxon>
        <taxon>Euteleostomi</taxon>
        <taxon>Mammalia</taxon>
        <taxon>Eutheria</taxon>
        <taxon>Euarchontoglires</taxon>
        <taxon>Glires</taxon>
        <taxon>Rodentia</taxon>
        <taxon>Myomorpha</taxon>
        <taxon>Muroidea</taxon>
        <taxon>Muridae</taxon>
        <taxon>Murinae</taxon>
        <taxon>Rattus</taxon>
    </lineage>
</organism>
<evidence type="ECO:0000250" key="1">
    <source>
        <dbReference type="UniProtKB" id="P22309"/>
    </source>
</evidence>
<evidence type="ECO:0000255" key="2"/>
<evidence type="ECO:0000269" key="3">
    <source>
    </source>
</evidence>
<evidence type="ECO:0000269" key="4">
    <source>
    </source>
</evidence>
<evidence type="ECO:0000305" key="5"/>
<evidence type="ECO:0000312" key="6">
    <source>
        <dbReference type="RGD" id="3935"/>
    </source>
</evidence>
<sequence length="535" mass="59663">MSVVCRSSCSLLLLPCLLLCVLGPSASHAGKLLVIPIDGSHWLSMLGVIQQLQQKGHEVVVIAPEASIHIKEGSFYTMRKYPVPFQNENVTAAFVELGRSVFDQDPFLLRVVKTYNKVKRDSSMLLSGCSHLLHNAEFMASLEQSHFDALLTDPFLPCGSIVAQYLSLPAVYFLNALPCSLDLEATQCPAPLSYVPKSLSSNTDRMNFLQRVKNMIIALTENFLCRVVYSPYGSLATEILQKEVTVKDLLSPASIWLMRNDFVKDYPRPIMPNMVFIGGINCLQKKALSQEFEAYVNASGEHGIVVFSLGSMVSEIPEKKAMEIAEALGRIPQTVLWRYTGTRPSNLAKNTILVKWLPQNDLLGHPKARAFITHSGSHGIYEGICNGVPMVMMPLFGDQMDNAKRMETRGAGVTLNVLEMTADDLENALKTVINNKSYKENIMRLSSLHKDRPIEPLDLAVFWVEYVMRHKGAPHLRPAAHDLTWYQYHSLDVIGFLLAIVLTVVFIVYKSCAYGCRKCFGGKGRVKKSHKSKTH</sequence>
<accession>Q64550</accession>
<accession>Q64635</accession>
<keyword id="KW-0025">Alternative splicing</keyword>
<keyword id="KW-0903">Direct protein sequencing</keyword>
<keyword id="KW-0256">Endoplasmic reticulum</keyword>
<keyword id="KW-0325">Glycoprotein</keyword>
<keyword id="KW-0328">Glycosyltransferase</keyword>
<keyword id="KW-0443">Lipid metabolism</keyword>
<keyword id="KW-0472">Membrane</keyword>
<keyword id="KW-1185">Reference proteome</keyword>
<keyword id="KW-0732">Signal</keyword>
<keyword id="KW-0808">Transferase</keyword>
<keyword id="KW-0812">Transmembrane</keyword>
<keyword id="KW-1133">Transmembrane helix</keyword>
<protein>
    <recommendedName>
        <fullName evidence="5">UDP-glucuronosyltransferase 1A1</fullName>
        <shortName evidence="1">UGT1A1</shortName>
        <ecNumber evidence="1">2.4.1.17</ecNumber>
    </recommendedName>
    <alternativeName>
        <fullName>B1</fullName>
    </alternativeName>
    <alternativeName>
        <fullName>UDP-glucuronosyltransferase 1-1</fullName>
        <shortName>UDPGT 1-1</shortName>
        <shortName>UGT1*1</shortName>
        <shortName>UGT1-01</shortName>
        <shortName>UGT1.1</shortName>
    </alternativeName>
</protein>
<name>UD11_RAT</name>
<gene>
    <name evidence="6" type="primary">Ugt1a1</name>
    <name type="synonym">Ugt1</name>
</gene>
<proteinExistence type="evidence at protein level"/>
<feature type="signal peptide" evidence="3">
    <location>
        <begin position="1"/>
        <end position="29"/>
    </location>
</feature>
<feature type="chain" id="PRO_0000036011" description="UDP-glucuronosyltransferase 1A1">
    <location>
        <begin position="30"/>
        <end position="535"/>
    </location>
</feature>
<feature type="transmembrane region" description="Helical" evidence="2">
    <location>
        <begin position="493"/>
        <end position="509"/>
    </location>
</feature>
<feature type="glycosylation site" description="N-linked (GlcNAc...) asparagine" evidence="2">
    <location>
        <position position="89"/>
    </location>
</feature>
<feature type="glycosylation site" description="N-linked (GlcNAc...) asparagine" evidence="2">
    <location>
        <position position="297"/>
    </location>
</feature>
<feature type="glycosylation site" description="N-linked (GlcNAc...) asparagine" evidence="2">
    <location>
        <position position="435"/>
    </location>
</feature>
<feature type="sequence conflict" description="In Ref. 2; BAA07260." evidence="5" ref="2">
    <original>A</original>
    <variation>D</variation>
    <location>
        <position position="253"/>
    </location>
</feature>
<comment type="function">
    <text evidence="1 4">UDP-glucuronosyltransferase (UGT) that catalyzes phase II biotransformation reactions in which lipophilic substrates are conjugated with glucuronic acid to increase the metabolite's water solubility, thereby facilitating excretion into either the urine or bile (PubMed:8554318). Essential for the elimination and detoxification of drugs, xenobiotics and endogenous compounds (PubMed:8554318). Catalyzes the glucuronidation of endogenous estrogen hormones such as estradiol, estrone and estriol (By similarity). Involved in the glucuronidation of bilirubin, a degradation product occurring in the normal catabolic pathway that breaks down heme in vertebrates (By similarity). Involved in the glucuronidation of arachidonic acid (AA) and AA-derived eicosanoids including 15-HETE, 20-HETE, PGB1 and F2-isoprostane (8-iso-PGF2alpha). Involved in the glucuronidation of the phytochemical ferulic acid at the phenolic or the carboxylic acid group (By similarity). Also catalyzes the glucuronidation the isoflavones genistein, daidzein, glycitein, formononetin, biochanin A and prunetin, which are phytoestrogens with anticancer and cardiovascular properties (By similarity). Involved in the glucuronidation of the AGTR1 angiotensin receptor antagonist losartan, a drug which can inhibit the effect of angiotensin II (By similarity). Involved in the biotransformation of 7-ethyl-10-hydroxycamptothecin (SN-38), the pharmacologically active metabolite of the anticancer drug irinotecan (By similarity).</text>
</comment>
<comment type="catalytic activity">
    <reaction evidence="1">
        <text>glucuronate acceptor + UDP-alpha-D-glucuronate = acceptor beta-D-glucuronoside + UDP + H(+)</text>
        <dbReference type="Rhea" id="RHEA:21032"/>
        <dbReference type="ChEBI" id="CHEBI:15378"/>
        <dbReference type="ChEBI" id="CHEBI:58052"/>
        <dbReference type="ChEBI" id="CHEBI:58223"/>
        <dbReference type="ChEBI" id="CHEBI:132367"/>
        <dbReference type="ChEBI" id="CHEBI:132368"/>
        <dbReference type="EC" id="2.4.1.17"/>
    </reaction>
    <physiologicalReaction direction="left-to-right" evidence="1">
        <dbReference type="Rhea" id="RHEA:21033"/>
    </physiologicalReaction>
</comment>
<comment type="catalytic activity">
    <reaction evidence="1">
        <text>17beta-estradiol + UDP-alpha-D-glucuronate = 17beta-estradiol 3-O-(beta-D-glucuronate) + UDP + H(+)</text>
        <dbReference type="Rhea" id="RHEA:52460"/>
        <dbReference type="ChEBI" id="CHEBI:15378"/>
        <dbReference type="ChEBI" id="CHEBI:16469"/>
        <dbReference type="ChEBI" id="CHEBI:58052"/>
        <dbReference type="ChEBI" id="CHEBI:58223"/>
        <dbReference type="ChEBI" id="CHEBI:136641"/>
    </reaction>
    <physiologicalReaction direction="left-to-right" evidence="1">
        <dbReference type="Rhea" id="RHEA:52461"/>
    </physiologicalReaction>
</comment>
<comment type="catalytic activity">
    <reaction evidence="1">
        <text>2-hydroxyestrone + UDP-alpha-D-glucuronate = 2-hydroxyestrone 3-O-(beta-D-glucuronate) + UDP + H(+)</text>
        <dbReference type="Rhea" id="RHEA:53048"/>
        <dbReference type="ChEBI" id="CHEBI:1156"/>
        <dbReference type="ChEBI" id="CHEBI:15378"/>
        <dbReference type="ChEBI" id="CHEBI:58052"/>
        <dbReference type="ChEBI" id="CHEBI:58223"/>
        <dbReference type="ChEBI" id="CHEBI:136967"/>
    </reaction>
    <physiologicalReaction direction="left-to-right" evidence="1">
        <dbReference type="Rhea" id="RHEA:53049"/>
    </physiologicalReaction>
</comment>
<comment type="catalytic activity">
    <reaction evidence="1">
        <text>2-hydroxy-17beta-estradiol + UDP-alpha-D-glucuronate = 2-hydroxy-17beta-estradiol 3-O-(beta-D-glucuronate) + UDP + H(+)</text>
        <dbReference type="Rhea" id="RHEA:53004"/>
        <dbReference type="ChEBI" id="CHEBI:15378"/>
        <dbReference type="ChEBI" id="CHEBI:28744"/>
        <dbReference type="ChEBI" id="CHEBI:58052"/>
        <dbReference type="ChEBI" id="CHEBI:58223"/>
        <dbReference type="ChEBI" id="CHEBI:136931"/>
    </reaction>
    <physiologicalReaction direction="left-to-right" evidence="1">
        <dbReference type="Rhea" id="RHEA:53005"/>
    </physiologicalReaction>
</comment>
<comment type="catalytic activity">
    <reaction evidence="1">
        <text>2-methoxy-17beta-estradiol + UDP-alpha-D-glucuronate = 2-methoxy-17beta-estradiol 3-O-(beta-D-glucuronate) + UDP + H(+)</text>
        <dbReference type="Rhea" id="RHEA:53072"/>
        <dbReference type="ChEBI" id="CHEBI:15378"/>
        <dbReference type="ChEBI" id="CHEBI:28955"/>
        <dbReference type="ChEBI" id="CHEBI:58052"/>
        <dbReference type="ChEBI" id="CHEBI:58223"/>
        <dbReference type="ChEBI" id="CHEBI:136974"/>
    </reaction>
    <physiologicalReaction direction="left-to-right" evidence="1">
        <dbReference type="Rhea" id="RHEA:53073"/>
    </physiologicalReaction>
</comment>
<comment type="catalytic activity">
    <reaction evidence="1">
        <text>17alpha-estradiol + UDP-alpha-D-glucuronate = 17alpha-estradiol 3-O-(beta-D-glucuronate) + UDP + H(+)</text>
        <dbReference type="Rhea" id="RHEA:52868"/>
        <dbReference type="ChEBI" id="CHEBI:15378"/>
        <dbReference type="ChEBI" id="CHEBI:17160"/>
        <dbReference type="ChEBI" id="CHEBI:57529"/>
        <dbReference type="ChEBI" id="CHEBI:58052"/>
        <dbReference type="ChEBI" id="CHEBI:58223"/>
    </reaction>
    <physiologicalReaction direction="left-to-right" evidence="1">
        <dbReference type="Rhea" id="RHEA:52869"/>
    </physiologicalReaction>
</comment>
<comment type="catalytic activity">
    <reaction evidence="1">
        <text>16beta,17beta-estriol + UDP-alpha-D-glucuronate = 16beta,17beta-estriol 16-O-(beta-D-glucuronate) + UDP + H(+)</text>
        <dbReference type="Rhea" id="RHEA:52880"/>
        <dbReference type="ChEBI" id="CHEBI:15378"/>
        <dbReference type="ChEBI" id="CHEBI:58052"/>
        <dbReference type="ChEBI" id="CHEBI:58223"/>
        <dbReference type="ChEBI" id="CHEBI:87620"/>
        <dbReference type="ChEBI" id="CHEBI:136886"/>
    </reaction>
    <physiologicalReaction direction="left-to-right" evidence="1">
        <dbReference type="Rhea" id="RHEA:52881"/>
    </physiologicalReaction>
</comment>
<comment type="catalytic activity">
    <reaction evidence="1">
        <text>losartan + UDP-alpha-D-glucuronate = losartan-2-N-beta-D-glucuronide + UDP</text>
        <dbReference type="Rhea" id="RHEA:63720"/>
        <dbReference type="ChEBI" id="CHEBI:58052"/>
        <dbReference type="ChEBI" id="CHEBI:58223"/>
        <dbReference type="ChEBI" id="CHEBI:149504"/>
        <dbReference type="ChEBI" id="CHEBI:149507"/>
    </reaction>
    <physiologicalReaction direction="left-to-right" evidence="1">
        <dbReference type="Rhea" id="RHEA:63721"/>
    </physiologicalReaction>
</comment>
<comment type="catalytic activity">
    <reaction evidence="1">
        <text>prunetin + UDP-alpha-D-glucuronate = prunetin-4'-O-beta-D-glucuronide + UDP</text>
        <dbReference type="Rhea" id="RHEA:63588"/>
        <dbReference type="ChEBI" id="CHEBI:58052"/>
        <dbReference type="ChEBI" id="CHEBI:58223"/>
        <dbReference type="ChEBI" id="CHEBI:147403"/>
        <dbReference type="ChEBI" id="CHEBI:147404"/>
    </reaction>
    <physiologicalReaction direction="left-to-right" evidence="1">
        <dbReference type="Rhea" id="RHEA:63589"/>
    </physiologicalReaction>
</comment>
<comment type="catalytic activity">
    <reaction evidence="1">
        <text>SN-38 + UDP-alpha-D-glucuronate = SN-38 O-beta-D-glucuronide + UDP + H(+)</text>
        <dbReference type="Rhea" id="RHEA:63696"/>
        <dbReference type="ChEBI" id="CHEBI:8988"/>
        <dbReference type="ChEBI" id="CHEBI:15378"/>
        <dbReference type="ChEBI" id="CHEBI:58052"/>
        <dbReference type="ChEBI" id="CHEBI:58223"/>
        <dbReference type="ChEBI" id="CHEBI:149482"/>
    </reaction>
    <physiologicalReaction direction="left-to-right" evidence="1">
        <dbReference type="Rhea" id="RHEA:63697"/>
    </physiologicalReaction>
</comment>
<comment type="catalytic activity">
    <reaction evidence="1">
        <text>(4Z,15Z)-bilirubin IXalpha + UDP-alpha-D-glucuronate = (4Z,15Z)-bilirubin IXalpha C12-beta-D-glucuronoside + UDP</text>
        <dbReference type="Rhea" id="RHEA:75099"/>
        <dbReference type="ChEBI" id="CHEBI:57977"/>
        <dbReference type="ChEBI" id="CHEBI:58052"/>
        <dbReference type="ChEBI" id="CHEBI:58223"/>
        <dbReference type="ChEBI" id="CHEBI:229705"/>
    </reaction>
    <physiologicalReaction direction="left-to-right" evidence="1">
        <dbReference type="Rhea" id="RHEA:75100"/>
    </physiologicalReaction>
</comment>
<comment type="catalytic activity">
    <reaction evidence="1">
        <text>(4Z,15Z)-bilirubin IXalpha + UDP-alpha-D-glucuronate = (4Z,15Z)-bilirubin IXalpha C8-beta-D-glucuronoside + UDP</text>
        <dbReference type="Rhea" id="RHEA:79067"/>
        <dbReference type="ChEBI" id="CHEBI:57977"/>
        <dbReference type="ChEBI" id="CHEBI:58052"/>
        <dbReference type="ChEBI" id="CHEBI:58223"/>
        <dbReference type="ChEBI" id="CHEBI:229704"/>
    </reaction>
    <physiologicalReaction direction="left-to-right" evidence="1">
        <dbReference type="Rhea" id="RHEA:79068"/>
    </physiologicalReaction>
</comment>
<comment type="catalytic activity">
    <reaction evidence="1">
        <text>(4Z,15Z)-bilirubin IXalpha C8-beta-D-glucuronoside + UDP-alpha-D-glucuronate = (4Z,15Z)-bilirubin IXalpha C8,C12-beta-D-bisglucuronoside + UDP</text>
        <dbReference type="Rhea" id="RHEA:79071"/>
        <dbReference type="ChEBI" id="CHEBI:58052"/>
        <dbReference type="ChEBI" id="CHEBI:58223"/>
        <dbReference type="ChEBI" id="CHEBI:229704"/>
        <dbReference type="ChEBI" id="CHEBI:229706"/>
    </reaction>
    <physiologicalReaction direction="left-to-right" evidence="1">
        <dbReference type="Rhea" id="RHEA:79072"/>
    </physiologicalReaction>
</comment>
<comment type="catalytic activity">
    <reaction evidence="1">
        <text>(4Z,15Z)-bilirubin IXalpha C12-beta-D-glucuronoside + UDP-alpha-D-glucuronate = (4Z,15Z)-bilirubin IXalpha C8,C12-beta-D-bisglucuronoside + UDP</text>
        <dbReference type="Rhea" id="RHEA:79075"/>
        <dbReference type="ChEBI" id="CHEBI:58052"/>
        <dbReference type="ChEBI" id="CHEBI:58223"/>
        <dbReference type="ChEBI" id="CHEBI:229705"/>
        <dbReference type="ChEBI" id="CHEBI:229706"/>
    </reaction>
    <physiologicalReaction direction="left-to-right" evidence="1">
        <dbReference type="Rhea" id="RHEA:79076"/>
    </physiologicalReaction>
</comment>
<comment type="catalytic activity">
    <reaction evidence="1">
        <text>8-iso-prostaglandin F2alpha + UDP-alpha-D-glucuronate = 8-iso-prostaglandin F2alpha-glucuronide + UDP + H(+)</text>
        <dbReference type="Rhea" id="RHEA:79907"/>
        <dbReference type="ChEBI" id="CHEBI:15378"/>
        <dbReference type="ChEBI" id="CHEBI:58052"/>
        <dbReference type="ChEBI" id="CHEBI:58223"/>
        <dbReference type="ChEBI" id="CHEBI:77768"/>
        <dbReference type="ChEBI" id="CHEBI:229786"/>
    </reaction>
    <physiologicalReaction direction="left-to-right" evidence="1">
        <dbReference type="Rhea" id="RHEA:79908"/>
    </physiologicalReaction>
</comment>
<comment type="catalytic activity">
    <reaction evidence="1">
        <text>(5Z,8Z,11Z,14Z)-eicosatetraenoate + UDP-alpha-D-glucuronate = O-[(5Z),(8Z),(11Z),(14Z)-eicosatetraenoyl]-beta-D-glucuronate + UDP</text>
        <dbReference type="Rhea" id="RHEA:79915"/>
        <dbReference type="ChEBI" id="CHEBI:32395"/>
        <dbReference type="ChEBI" id="CHEBI:58052"/>
        <dbReference type="ChEBI" id="CHEBI:58223"/>
        <dbReference type="ChEBI" id="CHEBI:231327"/>
    </reaction>
    <physiologicalReaction direction="left-to-right" evidence="1">
        <dbReference type="Rhea" id="RHEA:79916"/>
    </physiologicalReaction>
</comment>
<comment type="catalytic activity">
    <reaction evidence="1">
        <text>15-hydroxy-(5Z,8Z,11Z,13E)-eicosatetraenoate + UDP-alpha-D-glucuronate = 15-O-(beta-D-glucuronosyl)-(5Z,8Z,11Z,14Z)-eicosatetraenoate + UDP + H(+)</text>
        <dbReference type="Rhea" id="RHEA:79919"/>
        <dbReference type="ChEBI" id="CHEBI:15378"/>
        <dbReference type="ChEBI" id="CHEBI:58052"/>
        <dbReference type="ChEBI" id="CHEBI:58223"/>
        <dbReference type="ChEBI" id="CHEBI:78832"/>
        <dbReference type="ChEBI" id="CHEBI:231329"/>
    </reaction>
    <physiologicalReaction direction="left-to-right" evidence="1">
        <dbReference type="Rhea" id="RHEA:79920"/>
    </physiologicalReaction>
</comment>
<comment type="catalytic activity">
    <reaction evidence="1">
        <text>20-hydroxy-(5Z,8Z,11Z,14Z)-eicosatetraenoate + UDP-alpha-D-glucuronate = 20-O-(beta-D-glucuronosyl)-(5Z,8Z,11Z,14Z)-eicosatetraenoate + UDP + H(+)</text>
        <dbReference type="Rhea" id="RHEA:79927"/>
        <dbReference type="ChEBI" id="CHEBI:15378"/>
        <dbReference type="ChEBI" id="CHEBI:58052"/>
        <dbReference type="ChEBI" id="CHEBI:58223"/>
        <dbReference type="ChEBI" id="CHEBI:76624"/>
        <dbReference type="ChEBI" id="CHEBI:231328"/>
    </reaction>
    <physiologicalReaction direction="left-to-right" evidence="1">
        <dbReference type="Rhea" id="RHEA:79928"/>
    </physiologicalReaction>
</comment>
<comment type="catalytic activity">
    <reaction evidence="1">
        <text>prostaglandin B1 + UDP-alpha-D-glucuronate = 15-O-(beta-D-glucuronosyl)-prostaglandin B1 + UDP + H(+)</text>
        <dbReference type="Rhea" id="RHEA:79935"/>
        <dbReference type="ChEBI" id="CHEBI:15378"/>
        <dbReference type="ChEBI" id="CHEBI:58052"/>
        <dbReference type="ChEBI" id="CHEBI:58223"/>
        <dbReference type="ChEBI" id="CHEBI:133393"/>
        <dbReference type="ChEBI" id="CHEBI:231330"/>
    </reaction>
    <physiologicalReaction direction="left-to-right" evidence="1">
        <dbReference type="Rhea" id="RHEA:79936"/>
    </physiologicalReaction>
</comment>
<comment type="catalytic activity">
    <reaction evidence="1">
        <text>(E)-ferulate + UDP-alpha-D-glucuronate = (E)-4-O-(beta-D-glucuronosyl)-ferulate + UDP + H(+)</text>
        <dbReference type="Rhea" id="RHEA:79951"/>
        <dbReference type="ChEBI" id="CHEBI:15378"/>
        <dbReference type="ChEBI" id="CHEBI:29749"/>
        <dbReference type="ChEBI" id="CHEBI:58052"/>
        <dbReference type="ChEBI" id="CHEBI:58223"/>
        <dbReference type="ChEBI" id="CHEBI:231331"/>
    </reaction>
    <physiologicalReaction direction="left-to-right" evidence="1">
        <dbReference type="Rhea" id="RHEA:79952"/>
    </physiologicalReaction>
</comment>
<comment type="catalytic activity">
    <reaction evidence="1">
        <text>(E)-ferulate + UDP-alpha-D-glucuronate = (E)-ferulic acid beta-D-glucuronate ester + UDP</text>
        <dbReference type="Rhea" id="RHEA:79955"/>
        <dbReference type="ChEBI" id="CHEBI:29749"/>
        <dbReference type="ChEBI" id="CHEBI:58052"/>
        <dbReference type="ChEBI" id="CHEBI:58223"/>
        <dbReference type="ChEBI" id="CHEBI:231332"/>
    </reaction>
    <physiologicalReaction direction="left-to-right" evidence="1">
        <dbReference type="Rhea" id="RHEA:79956"/>
    </physiologicalReaction>
</comment>
<comment type="subunit">
    <text evidence="1">Homodimers. Homooligomer. Interacts with UGT1A3, UGT1A4, UGT1A6, UGT1A7, UGT1A8, UGT1A9 and UGT1A10 to form heterodimers.</text>
</comment>
<comment type="subcellular location">
    <subcellularLocation>
        <location evidence="1">Endoplasmic reticulum membrane</location>
        <topology evidence="2">Single-pass membrane protein</topology>
    </subcellularLocation>
</comment>
<comment type="alternative products">
    <event type="alternative splicing"/>
    <isoform>
        <id>Q64550-1</id>
        <name>1</name>
        <sequence type="displayed"/>
    </isoform>
    <text evidence="1">UGT1A1 is one of the isoforms produced at the UGT1A complex locus. The UGT1A complex locus produces different isoforms based on alternative use of promoters, first exons and terminal exons.</text>
</comment>
<comment type="induction">
    <text evidence="4">Induced in 3-methylcholanthrene-treated rats.</text>
</comment>
<comment type="similarity">
    <text evidence="5">Belongs to the UDP-glycosyltransferase family.</text>
</comment>
<reference key="1">
    <citation type="journal article" date="1995" name="Mol. Pharmacol.">
        <title>Cloning and stable expression of a cDNA encoding a rat liver UDP-glucuronosyltransferase (UDP-glucuronosyltransferase 1.1) that catalyzes the glucuronidation of opioids and bilirubin.</title>
        <authorList>
            <person name="Coffman B.L."/>
            <person name="Green M.D."/>
            <person name="King C.O."/>
            <person name="Tephly T.R."/>
        </authorList>
    </citation>
    <scope>NUCLEOTIDE SEQUENCE [GENOMIC DNA]</scope>
    <source>
        <strain>Wistar</strain>
    </source>
</reference>
<reference key="2">
    <citation type="journal article" date="1995" name="J. Biochem.">
        <title>Drug-responsive and tissue-specific alternative expression of multiple first exons in rat UDP-glucuronosyltransferase family 1 (UGT1) gene complex.</title>
        <authorList>
            <person name="Emi Y."/>
            <person name="Ikushiro S."/>
            <person name="Iyanagi T."/>
        </authorList>
    </citation>
    <scope>NUCLEOTIDE SEQUENCE [GENOMIC DNA] OF 1-290</scope>
    <source>
        <strain>Wistar</strain>
    </source>
</reference>
<reference key="3">
    <citation type="journal article" date="1994" name="Arch. Biochem. Biophys.">
        <title>Purification of a phenobarbital-inducible morphine UDP-glucuronyltransferase isoform, absent from Gunn rat liver.</title>
        <authorList>
            <person name="Ishii Y."/>
            <person name="Tsuruda K."/>
            <person name="Tanaka M."/>
            <person name="Oguri K."/>
        </authorList>
    </citation>
    <scope>PROTEIN SEQUENCE OF 30-41</scope>
</reference>
<reference key="4">
    <citation type="journal article" date="1995" name="Arch. Biochem. Biophys.">
        <title>Identification and analysis of drug-responsive expression of UDP-glucuronosyltransferase family 1 (UGT1) isozyme in rat hepatic microsomes using anti-peptide antibodies.</title>
        <authorList>
            <person name="Ikushiro S."/>
            <person name="Emi Y."/>
            <person name="Iyanagi T."/>
        </authorList>
    </citation>
    <scope>FUNCTION</scope>
    <scope>INDUCTION BY 3-METHYLCHOLANTHRENE</scope>
</reference>